<comment type="similarity">
    <text evidence="3">Belongs to the UPF0690 family.</text>
</comment>
<proteinExistence type="evidence at transcript level"/>
<organism>
    <name type="scientific">Bos taurus</name>
    <name type="common">Bovine</name>
    <dbReference type="NCBI Taxonomy" id="9913"/>
    <lineage>
        <taxon>Eukaryota</taxon>
        <taxon>Metazoa</taxon>
        <taxon>Chordata</taxon>
        <taxon>Craniata</taxon>
        <taxon>Vertebrata</taxon>
        <taxon>Euteleostomi</taxon>
        <taxon>Mammalia</taxon>
        <taxon>Eutheria</taxon>
        <taxon>Laurasiatheria</taxon>
        <taxon>Artiodactyla</taxon>
        <taxon>Ruminantia</taxon>
        <taxon>Pecora</taxon>
        <taxon>Bovidae</taxon>
        <taxon>Bovinae</taxon>
        <taxon>Bos</taxon>
    </lineage>
</organism>
<accession>Q32LF5</accession>
<sequence length="182" mass="20552">MAAEEKDPLSYFAAYGSSSSGSSDEEDNSEPEETSRKGQDTAKSAGGYGNKAEKRLPGPDELFRSVTRPAFLYNPLNKQIDWERHVVKAPEEPPKEFKIWKSHYVPPPETYSTEKKPPPPELDMAIKWSNIYEDNGDDAPQNAKKARLLPEGEETVESDDEKDEHTSKKRKIELGEPTKKKK</sequence>
<reference key="1">
    <citation type="submission" date="2005-11" db="EMBL/GenBank/DDBJ databases">
        <authorList>
            <consortium name="NIH - Mammalian Gene Collection (MGC) project"/>
        </authorList>
    </citation>
    <scope>NUCLEOTIDE SEQUENCE [LARGE SCALE MRNA]</scope>
    <source>
        <strain>Crossbred X Angus</strain>
        <tissue>Liver</tissue>
    </source>
</reference>
<evidence type="ECO:0000250" key="1">
    <source>
        <dbReference type="UniProtKB" id="Q8N6N3"/>
    </source>
</evidence>
<evidence type="ECO:0000256" key="2">
    <source>
        <dbReference type="SAM" id="MobiDB-lite"/>
    </source>
</evidence>
<evidence type="ECO:0000305" key="3"/>
<protein>
    <recommendedName>
        <fullName>UPF0690 protein C1orf52 homolog</fullName>
    </recommendedName>
</protein>
<name>CA052_BOVIN</name>
<keyword id="KW-0597">Phosphoprotein</keyword>
<keyword id="KW-1185">Reference proteome</keyword>
<dbReference type="EMBL" id="BC109610">
    <property type="protein sequence ID" value="AAI09611.1"/>
    <property type="molecule type" value="mRNA"/>
</dbReference>
<dbReference type="RefSeq" id="NP_001032681.1">
    <property type="nucleotide sequence ID" value="NM_001037592.2"/>
</dbReference>
<dbReference type="FunCoup" id="Q32LF5">
    <property type="interactions" value="2497"/>
</dbReference>
<dbReference type="PaxDb" id="9913-ENSBTAP00000021717"/>
<dbReference type="GeneID" id="509947"/>
<dbReference type="KEGG" id="bta:509947"/>
<dbReference type="CTD" id="509947"/>
<dbReference type="VEuPathDB" id="HostDB:ENSBTAG00000016326"/>
<dbReference type="eggNOG" id="ENOG502QVJV">
    <property type="taxonomic scope" value="Eukaryota"/>
</dbReference>
<dbReference type="HOGENOM" id="CLU_127170_0_0_1"/>
<dbReference type="InParanoid" id="Q32LF5"/>
<dbReference type="OMA" id="PERICEP"/>
<dbReference type="OrthoDB" id="1906229at2759"/>
<dbReference type="TreeFam" id="TF333299"/>
<dbReference type="Proteomes" id="UP000009136">
    <property type="component" value="Chromosome 3"/>
</dbReference>
<dbReference type="Bgee" id="ENSBTAG00000016326">
    <property type="expression patterns" value="Expressed in spermatid and 106 other cell types or tissues"/>
</dbReference>
<dbReference type="InterPro" id="IPR029089">
    <property type="entry name" value="DUF4660"/>
</dbReference>
<dbReference type="PANTHER" id="PTHR31833">
    <property type="entry name" value="UPF0690 PROTEIN C1ORF52"/>
    <property type="match status" value="1"/>
</dbReference>
<dbReference type="PANTHER" id="PTHR31833:SF2">
    <property type="entry name" value="UPF0690 PROTEIN C1ORF52"/>
    <property type="match status" value="1"/>
</dbReference>
<dbReference type="Pfam" id="PF15559">
    <property type="entry name" value="DUF4660"/>
    <property type="match status" value="1"/>
</dbReference>
<feature type="chain" id="PRO_0000254629" description="UPF0690 protein C1orf52 homolog">
    <location>
        <begin position="1"/>
        <end position="182"/>
    </location>
</feature>
<feature type="region of interest" description="Disordered" evidence="2">
    <location>
        <begin position="1"/>
        <end position="61"/>
    </location>
</feature>
<feature type="region of interest" description="Disordered" evidence="2">
    <location>
        <begin position="132"/>
        <end position="182"/>
    </location>
</feature>
<feature type="compositionally biased region" description="Acidic residues" evidence="2">
    <location>
        <begin position="23"/>
        <end position="32"/>
    </location>
</feature>
<feature type="compositionally biased region" description="Basic and acidic residues" evidence="2">
    <location>
        <begin position="51"/>
        <end position="61"/>
    </location>
</feature>
<feature type="compositionally biased region" description="Acidic residues" evidence="2">
    <location>
        <begin position="151"/>
        <end position="162"/>
    </location>
</feature>
<feature type="compositionally biased region" description="Basic and acidic residues" evidence="2">
    <location>
        <begin position="172"/>
        <end position="182"/>
    </location>
</feature>
<feature type="modified residue" description="Phosphothreonine" evidence="1">
    <location>
        <position position="67"/>
    </location>
</feature>
<feature type="modified residue" description="Phosphotyrosine" evidence="1">
    <location>
        <position position="132"/>
    </location>
</feature>
<feature type="modified residue" description="Phosphoserine" evidence="1">
    <location>
        <position position="158"/>
    </location>
</feature>